<keyword id="KW-0378">Hydrolase</keyword>
<keyword id="KW-0479">Metal-binding</keyword>
<keyword id="KW-0665">Pyrimidine biosynthesis</keyword>
<keyword id="KW-1185">Reference proteome</keyword>
<keyword id="KW-0862">Zinc</keyword>
<accession>Q3Z354</accession>
<organism>
    <name type="scientific">Shigella sonnei (strain Ss046)</name>
    <dbReference type="NCBI Taxonomy" id="300269"/>
    <lineage>
        <taxon>Bacteria</taxon>
        <taxon>Pseudomonadati</taxon>
        <taxon>Pseudomonadota</taxon>
        <taxon>Gammaproteobacteria</taxon>
        <taxon>Enterobacterales</taxon>
        <taxon>Enterobacteriaceae</taxon>
        <taxon>Shigella</taxon>
    </lineage>
</organism>
<gene>
    <name evidence="1" type="primary">pyrC</name>
    <name type="ordered locus">SSON_1082</name>
</gene>
<dbReference type="EC" id="3.5.2.3" evidence="1"/>
<dbReference type="EMBL" id="CP000038">
    <property type="protein sequence ID" value="AAZ87808.1"/>
    <property type="molecule type" value="Genomic_DNA"/>
</dbReference>
<dbReference type="RefSeq" id="WP_000126534.1">
    <property type="nucleotide sequence ID" value="NC_007384.1"/>
</dbReference>
<dbReference type="SMR" id="Q3Z354"/>
<dbReference type="GeneID" id="75203649"/>
<dbReference type="KEGG" id="ssn:SSON_1082"/>
<dbReference type="HOGENOM" id="CLU_041558_1_0_6"/>
<dbReference type="UniPathway" id="UPA00070">
    <property type="reaction ID" value="UER00117"/>
</dbReference>
<dbReference type="Proteomes" id="UP000002529">
    <property type="component" value="Chromosome"/>
</dbReference>
<dbReference type="GO" id="GO:0005829">
    <property type="term" value="C:cytosol"/>
    <property type="evidence" value="ECO:0007669"/>
    <property type="project" value="TreeGrafter"/>
</dbReference>
<dbReference type="GO" id="GO:0004151">
    <property type="term" value="F:dihydroorotase activity"/>
    <property type="evidence" value="ECO:0007669"/>
    <property type="project" value="UniProtKB-UniRule"/>
</dbReference>
<dbReference type="GO" id="GO:0008270">
    <property type="term" value="F:zinc ion binding"/>
    <property type="evidence" value="ECO:0007669"/>
    <property type="project" value="UniProtKB-UniRule"/>
</dbReference>
<dbReference type="GO" id="GO:0006207">
    <property type="term" value="P:'de novo' pyrimidine nucleobase biosynthetic process"/>
    <property type="evidence" value="ECO:0007669"/>
    <property type="project" value="TreeGrafter"/>
</dbReference>
<dbReference type="GO" id="GO:0044205">
    <property type="term" value="P:'de novo' UMP biosynthetic process"/>
    <property type="evidence" value="ECO:0007669"/>
    <property type="project" value="UniProtKB-UniRule"/>
</dbReference>
<dbReference type="CDD" id="cd01294">
    <property type="entry name" value="DHOase"/>
    <property type="match status" value="1"/>
</dbReference>
<dbReference type="FunFam" id="3.20.20.140:FF:000006">
    <property type="entry name" value="Dihydroorotase"/>
    <property type="match status" value="1"/>
</dbReference>
<dbReference type="Gene3D" id="3.20.20.140">
    <property type="entry name" value="Metal-dependent hydrolases"/>
    <property type="match status" value="1"/>
</dbReference>
<dbReference type="HAMAP" id="MF_00219">
    <property type="entry name" value="PyrC_classII"/>
    <property type="match status" value="1"/>
</dbReference>
<dbReference type="InterPro" id="IPR006680">
    <property type="entry name" value="Amidohydro-rel"/>
</dbReference>
<dbReference type="InterPro" id="IPR004721">
    <property type="entry name" value="DHOdimr"/>
</dbReference>
<dbReference type="InterPro" id="IPR002195">
    <property type="entry name" value="Dihydroorotase_CS"/>
</dbReference>
<dbReference type="InterPro" id="IPR032466">
    <property type="entry name" value="Metal_Hydrolase"/>
</dbReference>
<dbReference type="NCBIfam" id="TIGR00856">
    <property type="entry name" value="pyrC_dimer"/>
    <property type="match status" value="1"/>
</dbReference>
<dbReference type="PANTHER" id="PTHR43137">
    <property type="entry name" value="DIHYDROOROTASE"/>
    <property type="match status" value="1"/>
</dbReference>
<dbReference type="PANTHER" id="PTHR43137:SF1">
    <property type="entry name" value="DIHYDROOROTASE"/>
    <property type="match status" value="1"/>
</dbReference>
<dbReference type="Pfam" id="PF01979">
    <property type="entry name" value="Amidohydro_1"/>
    <property type="match status" value="1"/>
</dbReference>
<dbReference type="PIRSF" id="PIRSF001237">
    <property type="entry name" value="DHOdimr"/>
    <property type="match status" value="1"/>
</dbReference>
<dbReference type="SUPFAM" id="SSF51556">
    <property type="entry name" value="Metallo-dependent hydrolases"/>
    <property type="match status" value="1"/>
</dbReference>
<dbReference type="PROSITE" id="PS00482">
    <property type="entry name" value="DIHYDROOROTASE_1"/>
    <property type="match status" value="1"/>
</dbReference>
<dbReference type="PROSITE" id="PS00483">
    <property type="entry name" value="DIHYDROOROTASE_2"/>
    <property type="match status" value="1"/>
</dbReference>
<protein>
    <recommendedName>
        <fullName evidence="1">Dihydroorotase</fullName>
        <shortName evidence="1">DHOase</shortName>
        <ecNumber evidence="1">3.5.2.3</ecNumber>
    </recommendedName>
</protein>
<proteinExistence type="inferred from homology"/>
<feature type="chain" id="PRO_1000024063" description="Dihydroorotase">
    <location>
        <begin position="1"/>
        <end position="348"/>
    </location>
</feature>
<feature type="active site" evidence="1">
    <location>
        <position position="251"/>
    </location>
</feature>
<feature type="binding site" evidence="1">
    <location>
        <position position="17"/>
    </location>
    <ligand>
        <name>Zn(2+)</name>
        <dbReference type="ChEBI" id="CHEBI:29105"/>
        <label>1</label>
    </ligand>
</feature>
<feature type="binding site" evidence="1">
    <location>
        <begin position="19"/>
        <end position="21"/>
    </location>
    <ligand>
        <name>substrate</name>
    </ligand>
</feature>
<feature type="binding site" evidence="1">
    <location>
        <position position="19"/>
    </location>
    <ligand>
        <name>Zn(2+)</name>
        <dbReference type="ChEBI" id="CHEBI:29105"/>
        <label>1</label>
    </ligand>
</feature>
<feature type="binding site" evidence="1">
    <location>
        <position position="45"/>
    </location>
    <ligand>
        <name>substrate</name>
    </ligand>
</feature>
<feature type="binding site" description="via carbamate group" evidence="1">
    <location>
        <position position="103"/>
    </location>
    <ligand>
        <name>Zn(2+)</name>
        <dbReference type="ChEBI" id="CHEBI:29105"/>
        <label>1</label>
    </ligand>
</feature>
<feature type="binding site" description="via carbamate group" evidence="1">
    <location>
        <position position="103"/>
    </location>
    <ligand>
        <name>Zn(2+)</name>
        <dbReference type="ChEBI" id="CHEBI:29105"/>
        <label>2</label>
    </ligand>
</feature>
<feature type="binding site" evidence="1">
    <location>
        <position position="140"/>
    </location>
    <ligand>
        <name>substrate</name>
    </ligand>
</feature>
<feature type="binding site" evidence="1">
    <location>
        <position position="140"/>
    </location>
    <ligand>
        <name>Zn(2+)</name>
        <dbReference type="ChEBI" id="CHEBI:29105"/>
        <label>2</label>
    </ligand>
</feature>
<feature type="binding site" evidence="1">
    <location>
        <position position="178"/>
    </location>
    <ligand>
        <name>Zn(2+)</name>
        <dbReference type="ChEBI" id="CHEBI:29105"/>
        <label>2</label>
    </ligand>
</feature>
<feature type="binding site" evidence="1">
    <location>
        <position position="223"/>
    </location>
    <ligand>
        <name>substrate</name>
    </ligand>
</feature>
<feature type="binding site" evidence="1">
    <location>
        <position position="251"/>
    </location>
    <ligand>
        <name>Zn(2+)</name>
        <dbReference type="ChEBI" id="CHEBI:29105"/>
        <label>1</label>
    </ligand>
</feature>
<feature type="binding site" evidence="1">
    <location>
        <position position="255"/>
    </location>
    <ligand>
        <name>substrate</name>
    </ligand>
</feature>
<feature type="binding site" evidence="1">
    <location>
        <position position="267"/>
    </location>
    <ligand>
        <name>substrate</name>
    </ligand>
</feature>
<feature type="modified residue" description="N6-carboxylysine" evidence="1">
    <location>
        <position position="103"/>
    </location>
</feature>
<reference key="1">
    <citation type="journal article" date="2005" name="Nucleic Acids Res.">
        <title>Genome dynamics and diversity of Shigella species, the etiologic agents of bacillary dysentery.</title>
        <authorList>
            <person name="Yang F."/>
            <person name="Yang J."/>
            <person name="Zhang X."/>
            <person name="Chen L."/>
            <person name="Jiang Y."/>
            <person name="Yan Y."/>
            <person name="Tang X."/>
            <person name="Wang J."/>
            <person name="Xiong Z."/>
            <person name="Dong J."/>
            <person name="Xue Y."/>
            <person name="Zhu Y."/>
            <person name="Xu X."/>
            <person name="Sun L."/>
            <person name="Chen S."/>
            <person name="Nie H."/>
            <person name="Peng J."/>
            <person name="Xu J."/>
            <person name="Wang Y."/>
            <person name="Yuan Z."/>
            <person name="Wen Y."/>
            <person name="Yao Z."/>
            <person name="Shen Y."/>
            <person name="Qiang B."/>
            <person name="Hou Y."/>
            <person name="Yu J."/>
            <person name="Jin Q."/>
        </authorList>
    </citation>
    <scope>NUCLEOTIDE SEQUENCE [LARGE SCALE GENOMIC DNA]</scope>
    <source>
        <strain>Ss046</strain>
    </source>
</reference>
<evidence type="ECO:0000255" key="1">
    <source>
        <dbReference type="HAMAP-Rule" id="MF_00219"/>
    </source>
</evidence>
<comment type="function">
    <text evidence="1">Catalyzes the reversible cyclization of carbamoyl aspartate to dihydroorotate.</text>
</comment>
<comment type="catalytic activity">
    <reaction evidence="1">
        <text>(S)-dihydroorotate + H2O = N-carbamoyl-L-aspartate + H(+)</text>
        <dbReference type="Rhea" id="RHEA:24296"/>
        <dbReference type="ChEBI" id="CHEBI:15377"/>
        <dbReference type="ChEBI" id="CHEBI:15378"/>
        <dbReference type="ChEBI" id="CHEBI:30864"/>
        <dbReference type="ChEBI" id="CHEBI:32814"/>
        <dbReference type="EC" id="3.5.2.3"/>
    </reaction>
</comment>
<comment type="cofactor">
    <cofactor evidence="1">
        <name>Zn(2+)</name>
        <dbReference type="ChEBI" id="CHEBI:29105"/>
    </cofactor>
    <text evidence="1">Binds 2 Zn(2+) ions per subunit.</text>
</comment>
<comment type="pathway">
    <text evidence="1">Pyrimidine metabolism; UMP biosynthesis via de novo pathway; (S)-dihydroorotate from bicarbonate: step 3/3.</text>
</comment>
<comment type="subunit">
    <text evidence="1">Homodimer.</text>
</comment>
<comment type="similarity">
    <text evidence="1">Belongs to the metallo-dependent hydrolases superfamily. DHOase family. Class II DHOase subfamily.</text>
</comment>
<name>PYRC_SHISS</name>
<sequence length="348" mass="38827">MTAPSQVLKIRRPDDWHLHLRDGDMLKTVVPYTSEIYGRAIVMPNLAPPVTTVEAAVAYRQRILDAVPAGHDFTPLMTCYLTDSLDPNELERGFNEGVFTAAKLYPANATTNSSHGVTSIDAIMPVLERMEKIGMPLLVHGEVTHADIDIFDREARFIESVMEPLRQRLTALKVVFEHITTKDAADYVRDGNERLAATITPQHLMFNRNHMLVGGVRPHLYCLPILKRNIHQQALRELVASGFNRVFLGTDSAPHARHRKESSCGCAGCFNAPTALGSYATVFEEMNALQHFEAFCSVNGPQFYGLPVNDTFIELVREEQQVAESIALTDDTLVPFLAGETVRWSVKQ</sequence>